<protein>
    <recommendedName>
        <fullName evidence="1">Probable endolytic peptidoglycan transglycosylase RlpA</fullName>
        <ecNumber evidence="1">4.2.2.-</ecNumber>
    </recommendedName>
</protein>
<evidence type="ECO:0000255" key="1">
    <source>
        <dbReference type="HAMAP-Rule" id="MF_02071"/>
    </source>
</evidence>
<sequence length="321" mass="33769">MKGINVCRSIAGVIGTASLTTLVWGNCPSGLLALNAITQADAPTAVSENNSSLAPLESSVTATSSTPAPAFQDTELISLVPHQGPENRLAVTLRVNQIPVVTFLGTATELAALSNDQVTDTMERAQTVARRLDELSGAEFFDPSTIKVGLDATTRQLVVKSEDEILLTINKNTVLPEKKLSAPETALQTANRLRRLLGGAEPIVALPAALQVARVNTFDAAATIKRIKGGIASWYGPGFHGRRTANGERFNQNALTAAHRTLPFGTRVKVTNLRNGQSVVVRINDRGPFTGGRVIDLSAGAARAIGIHSSGVGNVALDIVQ</sequence>
<gene>
    <name evidence="1" type="primary">rlpA</name>
    <name type="ordered locus">slr0423</name>
</gene>
<keyword id="KW-0961">Cell wall biogenesis/degradation</keyword>
<keyword id="KW-0456">Lyase</keyword>
<keyword id="KW-1185">Reference proteome</keyword>
<reference key="1">
    <citation type="journal article" date="1995" name="DNA Res.">
        <title>Sequence analysis of the genome of the unicellular cyanobacterium Synechocystis sp. strain PCC6803. I. Sequence features in the 1 Mb region from map positions 64% to 92% of the genome.</title>
        <authorList>
            <person name="Kaneko T."/>
            <person name="Tanaka A."/>
            <person name="Sato S."/>
            <person name="Kotani H."/>
            <person name="Sazuka T."/>
            <person name="Miyajima N."/>
            <person name="Sugiura M."/>
            <person name="Tabata S."/>
        </authorList>
    </citation>
    <scope>NUCLEOTIDE SEQUENCE [LARGE SCALE GENOMIC DNA]</scope>
    <source>
        <strain>ATCC 27184 / PCC 6803 / N-1</strain>
    </source>
</reference>
<reference key="2">
    <citation type="journal article" date="1996" name="DNA Res.">
        <title>Sequence analysis of the genome of the unicellular cyanobacterium Synechocystis sp. strain PCC6803. II. Sequence determination of the entire genome and assignment of potential protein-coding regions.</title>
        <authorList>
            <person name="Kaneko T."/>
            <person name="Sato S."/>
            <person name="Kotani H."/>
            <person name="Tanaka A."/>
            <person name="Asamizu E."/>
            <person name="Nakamura Y."/>
            <person name="Miyajima N."/>
            <person name="Hirosawa M."/>
            <person name="Sugiura M."/>
            <person name="Sasamoto S."/>
            <person name="Kimura T."/>
            <person name="Hosouchi T."/>
            <person name="Matsuno A."/>
            <person name="Muraki A."/>
            <person name="Nakazaki N."/>
            <person name="Naruo K."/>
            <person name="Okumura S."/>
            <person name="Shimpo S."/>
            <person name="Takeuchi C."/>
            <person name="Wada T."/>
            <person name="Watanabe A."/>
            <person name="Yamada M."/>
            <person name="Yasuda M."/>
            <person name="Tabata S."/>
        </authorList>
    </citation>
    <scope>NUCLEOTIDE SEQUENCE [LARGE SCALE GENOMIC DNA]</scope>
    <source>
        <strain>ATCC 27184 / PCC 6803 / Kazusa</strain>
    </source>
</reference>
<accession>Q55752</accession>
<name>RLPA_SYNY3</name>
<proteinExistence type="inferred from homology"/>
<organism>
    <name type="scientific">Synechocystis sp. (strain ATCC 27184 / PCC 6803 / Kazusa)</name>
    <dbReference type="NCBI Taxonomy" id="1111708"/>
    <lineage>
        <taxon>Bacteria</taxon>
        <taxon>Bacillati</taxon>
        <taxon>Cyanobacteriota</taxon>
        <taxon>Cyanophyceae</taxon>
        <taxon>Synechococcales</taxon>
        <taxon>Merismopediaceae</taxon>
        <taxon>Synechocystis</taxon>
    </lineage>
</organism>
<dbReference type="EC" id="4.2.2.-" evidence="1"/>
<dbReference type="EMBL" id="BA000022">
    <property type="protein sequence ID" value="BAA10397.1"/>
    <property type="molecule type" value="Genomic_DNA"/>
</dbReference>
<dbReference type="PIR" id="S76551">
    <property type="entry name" value="S76551"/>
</dbReference>
<dbReference type="SMR" id="Q55752"/>
<dbReference type="IntAct" id="Q55752">
    <property type="interactions" value="6"/>
</dbReference>
<dbReference type="STRING" id="1148.gene:10499898"/>
<dbReference type="PaxDb" id="1148-1001663"/>
<dbReference type="EnsemblBacteria" id="BAA10397">
    <property type="protein sequence ID" value="BAA10397"/>
    <property type="gene ID" value="BAA10397"/>
</dbReference>
<dbReference type="KEGG" id="syn:slr0423"/>
<dbReference type="eggNOG" id="COG0797">
    <property type="taxonomic scope" value="Bacteria"/>
</dbReference>
<dbReference type="InParanoid" id="Q55752"/>
<dbReference type="Proteomes" id="UP000001425">
    <property type="component" value="Chromosome"/>
</dbReference>
<dbReference type="GO" id="GO:0008932">
    <property type="term" value="F:lytic endotransglycosylase activity"/>
    <property type="evidence" value="ECO:0007669"/>
    <property type="project" value="UniProtKB-UniRule"/>
</dbReference>
<dbReference type="GO" id="GO:0071555">
    <property type="term" value="P:cell wall organization"/>
    <property type="evidence" value="ECO:0007669"/>
    <property type="project" value="UniProtKB-KW"/>
</dbReference>
<dbReference type="GO" id="GO:0000270">
    <property type="term" value="P:peptidoglycan metabolic process"/>
    <property type="evidence" value="ECO:0007669"/>
    <property type="project" value="UniProtKB-UniRule"/>
</dbReference>
<dbReference type="CDD" id="cd22268">
    <property type="entry name" value="DPBB_RlpA-like"/>
    <property type="match status" value="1"/>
</dbReference>
<dbReference type="Gene3D" id="2.40.40.10">
    <property type="entry name" value="RlpA-like domain"/>
    <property type="match status" value="1"/>
</dbReference>
<dbReference type="HAMAP" id="MF_02071">
    <property type="entry name" value="RlpA"/>
    <property type="match status" value="1"/>
</dbReference>
<dbReference type="InterPro" id="IPR034718">
    <property type="entry name" value="RlpA"/>
</dbReference>
<dbReference type="InterPro" id="IPR009009">
    <property type="entry name" value="RlpA-like_DPBB"/>
</dbReference>
<dbReference type="InterPro" id="IPR036908">
    <property type="entry name" value="RlpA-like_sf"/>
</dbReference>
<dbReference type="InterPro" id="IPR012997">
    <property type="entry name" value="RplA"/>
</dbReference>
<dbReference type="NCBIfam" id="TIGR00413">
    <property type="entry name" value="rlpA"/>
    <property type="match status" value="1"/>
</dbReference>
<dbReference type="PANTHER" id="PTHR34183">
    <property type="entry name" value="ENDOLYTIC PEPTIDOGLYCAN TRANSGLYCOSYLASE RLPA"/>
    <property type="match status" value="1"/>
</dbReference>
<dbReference type="PANTHER" id="PTHR34183:SF8">
    <property type="entry name" value="ENDOLYTIC PEPTIDOGLYCAN TRANSGLYCOSYLASE RLPA-RELATED"/>
    <property type="match status" value="1"/>
</dbReference>
<dbReference type="Pfam" id="PF03330">
    <property type="entry name" value="DPBB_1"/>
    <property type="match status" value="1"/>
</dbReference>
<dbReference type="SUPFAM" id="SSF50685">
    <property type="entry name" value="Barwin-like endoglucanases"/>
    <property type="match status" value="1"/>
</dbReference>
<feature type="chain" id="PRO_0000190007" description="Probable endolytic peptidoglycan transglycosylase RlpA">
    <location>
        <begin position="1"/>
        <end position="321"/>
    </location>
</feature>
<comment type="function">
    <text evidence="1">Lytic transglycosylase with a strong preference for naked glycan strands that lack stem peptides.</text>
</comment>
<comment type="similarity">
    <text evidence="1">Belongs to the RlpA family.</text>
</comment>